<comment type="similarity">
    <text evidence="1">Belongs to the UPF0149 family.</text>
</comment>
<proteinExistence type="inferred from homology"/>
<reference key="1">
    <citation type="journal article" date="2002" name="Nucleic Acids Res.">
        <title>Genome sequence of Shigella flexneri 2a: insights into pathogenicity through comparison with genomes of Escherichia coli K12 and O157.</title>
        <authorList>
            <person name="Jin Q."/>
            <person name="Yuan Z."/>
            <person name="Xu J."/>
            <person name="Wang Y."/>
            <person name="Shen Y."/>
            <person name="Lu W."/>
            <person name="Wang J."/>
            <person name="Liu H."/>
            <person name="Yang J."/>
            <person name="Yang F."/>
            <person name="Zhang X."/>
            <person name="Zhang J."/>
            <person name="Yang G."/>
            <person name="Wu H."/>
            <person name="Qu D."/>
            <person name="Dong J."/>
            <person name="Sun L."/>
            <person name="Xue Y."/>
            <person name="Zhao A."/>
            <person name="Gao Y."/>
            <person name="Zhu J."/>
            <person name="Kan B."/>
            <person name="Ding K."/>
            <person name="Chen S."/>
            <person name="Cheng H."/>
            <person name="Yao Z."/>
            <person name="He B."/>
            <person name="Chen R."/>
            <person name="Ma D."/>
            <person name="Qiang B."/>
            <person name="Wen Y."/>
            <person name="Hou Y."/>
            <person name="Yu J."/>
        </authorList>
    </citation>
    <scope>NUCLEOTIDE SEQUENCE [LARGE SCALE GENOMIC DNA]</scope>
    <source>
        <strain>301 / Serotype 2a</strain>
    </source>
</reference>
<reference key="2">
    <citation type="journal article" date="2003" name="Infect. Immun.">
        <title>Complete genome sequence and comparative genomics of Shigella flexneri serotype 2a strain 2457T.</title>
        <authorList>
            <person name="Wei J."/>
            <person name="Goldberg M.B."/>
            <person name="Burland V."/>
            <person name="Venkatesan M.M."/>
            <person name="Deng W."/>
            <person name="Fournier G."/>
            <person name="Mayhew G.F."/>
            <person name="Plunkett G. III"/>
            <person name="Rose D.J."/>
            <person name="Darling A."/>
            <person name="Mau B."/>
            <person name="Perna N.T."/>
            <person name="Payne S.M."/>
            <person name="Runyen-Janecky L.J."/>
            <person name="Zhou S."/>
            <person name="Schwartz D.C."/>
            <person name="Blattner F.R."/>
        </authorList>
    </citation>
    <scope>NUCLEOTIDE SEQUENCE [LARGE SCALE GENOMIC DNA]</scope>
    <source>
        <strain>ATCC 700930 / 2457T / Serotype 2a</strain>
    </source>
</reference>
<evidence type="ECO:0000305" key="1"/>
<protein>
    <recommendedName>
        <fullName>UPF0149 protein YgfB</fullName>
    </recommendedName>
</protein>
<accession>P0A8C7</accession>
<accession>P25533</accession>
<accession>Q8XD28</accession>
<name>YGFB_SHIFL</name>
<feature type="chain" id="PRO_0000207569" description="UPF0149 protein YgfB">
    <location>
        <begin position="1"/>
        <end position="192"/>
    </location>
</feature>
<dbReference type="EMBL" id="AE005674">
    <property type="protein sequence ID" value="AAN44379.2"/>
    <property type="molecule type" value="Genomic_DNA"/>
</dbReference>
<dbReference type="EMBL" id="AE014073">
    <property type="protein sequence ID" value="AAP18201.1"/>
    <property type="molecule type" value="Genomic_DNA"/>
</dbReference>
<dbReference type="RefSeq" id="NP_708672.2">
    <property type="nucleotide sequence ID" value="NC_004337.2"/>
</dbReference>
<dbReference type="RefSeq" id="WP_001295378.1">
    <property type="nucleotide sequence ID" value="NZ_WPGW01000018.1"/>
</dbReference>
<dbReference type="SMR" id="P0A8C7"/>
<dbReference type="STRING" id="198214.SF2895"/>
<dbReference type="PaxDb" id="198214-SF2895"/>
<dbReference type="GeneID" id="1025842"/>
<dbReference type="GeneID" id="93779092"/>
<dbReference type="KEGG" id="sfl:SF2895"/>
<dbReference type="KEGG" id="sfx:S3094"/>
<dbReference type="PATRIC" id="fig|198214.7.peg.3444"/>
<dbReference type="HOGENOM" id="CLU_085336_1_0_6"/>
<dbReference type="Proteomes" id="UP000001006">
    <property type="component" value="Chromosome"/>
</dbReference>
<dbReference type="Proteomes" id="UP000002673">
    <property type="component" value="Chromosome"/>
</dbReference>
<dbReference type="GO" id="GO:0005829">
    <property type="term" value="C:cytosol"/>
    <property type="evidence" value="ECO:0007669"/>
    <property type="project" value="TreeGrafter"/>
</dbReference>
<dbReference type="FunFam" id="1.20.120.740:FF:000001">
    <property type="entry name" value="UPF0149 protein YgfB"/>
    <property type="match status" value="1"/>
</dbReference>
<dbReference type="Gene3D" id="1.20.120.740">
    <property type="entry name" value="YgfB uncharacterised protein family UPF0149, PF03695"/>
    <property type="match status" value="1"/>
</dbReference>
<dbReference type="HAMAP" id="MF_00346">
    <property type="entry name" value="UPF0149"/>
    <property type="match status" value="1"/>
</dbReference>
<dbReference type="InterPro" id="IPR011978">
    <property type="entry name" value="YgfB-like"/>
</dbReference>
<dbReference type="InterPro" id="IPR036255">
    <property type="entry name" value="YgfB-like_sf"/>
</dbReference>
<dbReference type="NCBIfam" id="NF002477">
    <property type="entry name" value="PRK01736.1"/>
    <property type="match status" value="1"/>
</dbReference>
<dbReference type="NCBIfam" id="TIGR02292">
    <property type="entry name" value="ygfB_yecA"/>
    <property type="match status" value="1"/>
</dbReference>
<dbReference type="PANTHER" id="PTHR37528">
    <property type="entry name" value="UPF0149 PROTEIN YGFB"/>
    <property type="match status" value="1"/>
</dbReference>
<dbReference type="PANTHER" id="PTHR37528:SF1">
    <property type="entry name" value="UPF0149 PROTEIN YGFB"/>
    <property type="match status" value="1"/>
</dbReference>
<dbReference type="Pfam" id="PF03695">
    <property type="entry name" value="UPF0149"/>
    <property type="match status" value="1"/>
</dbReference>
<dbReference type="SUPFAM" id="SSF101327">
    <property type="entry name" value="YgfB-like"/>
    <property type="match status" value="1"/>
</dbReference>
<gene>
    <name type="primary">ygfB</name>
    <name type="ordered locus">SF2895</name>
    <name type="ordered locus">S3094</name>
</gene>
<sequence>MSIQNEMPGYNEMNQYLNQQGTGLTPAEMHGLISGMICGGNDDSSWLPLLHDLTNEGMAFGHELAQALRKMHSATSDALQDDGFLFQLYLPDGDDVSVFDRADALAGWVNHFLLGLGVTQPKLDKVTGETGEAIDDLRNIAQLGYDEDEDQEELEMSLEEIIEYVRVAALLCHDTFTHPQPTAPEVQKPTLH</sequence>
<keyword id="KW-1185">Reference proteome</keyword>
<organism>
    <name type="scientific">Shigella flexneri</name>
    <dbReference type="NCBI Taxonomy" id="623"/>
    <lineage>
        <taxon>Bacteria</taxon>
        <taxon>Pseudomonadati</taxon>
        <taxon>Pseudomonadota</taxon>
        <taxon>Gammaproteobacteria</taxon>
        <taxon>Enterobacterales</taxon>
        <taxon>Enterobacteriaceae</taxon>
        <taxon>Shigella</taxon>
    </lineage>
</organism>